<gene>
    <name type="primary">orb6</name>
    <name type="ORF">SPAC821.12</name>
</gene>
<name>ORB6_SCHPO</name>
<sequence>MDKNDYLHFERNPSLFPKSTLDKVQKTKKYIEHYYKVAVDHAVERNQRRINLEQRLATERGSEERKNRQLRASGEKESQFLRFRRTRLSLEDFSTIKVIGKGAFGEVRLVQKLDTGKIYAMKSLLKTEMFKRDQLAHVKAERDLLVESDSPWVVSLYYAFQDSLYLYLIMEFLPGGDLMTMLINYDTFSEDVTRFYMAECVLAIADVHRMGYIHRDIKPDNILIDRDGHIKLSDFGLSTGFYKQDQSASYMKPRTGNTVKRGQMVDAIWLTMSSKDKMATWKKNRRVMAYSTVGTPDYIAPEIFLQQGYGQDCDWWSLGAIMFECLIGWPPFCSENSHETYRKIINWRETLTFPNDIHLSIEARDLMDRLMTDSEHRLGRGGAIEIMQHPFFTGIDWDHIRETAAPFIPNLKSITDTHYFPVDELEQVPEQPVTQQPASVDPQTLEQTNLAFLGYTYKKFNYLTMKGAL</sequence>
<keyword id="KW-0067">ATP-binding</keyword>
<keyword id="KW-0418">Kinase</keyword>
<keyword id="KW-0547">Nucleotide-binding</keyword>
<keyword id="KW-0597">Phosphoprotein</keyword>
<keyword id="KW-1185">Reference proteome</keyword>
<keyword id="KW-0723">Serine/threonine-protein kinase</keyword>
<keyword id="KW-0808">Transferase</keyword>
<proteinExistence type="evidence at protein level"/>
<evidence type="ECO:0000255" key="1">
    <source>
        <dbReference type="PROSITE-ProRule" id="PRU00159"/>
    </source>
</evidence>
<evidence type="ECO:0000255" key="2">
    <source>
        <dbReference type="PROSITE-ProRule" id="PRU00618"/>
    </source>
</evidence>
<evidence type="ECO:0000255" key="3">
    <source>
        <dbReference type="PROSITE-ProRule" id="PRU10027"/>
    </source>
</evidence>
<evidence type="ECO:0000269" key="4">
    <source>
    </source>
</evidence>
<comment type="function">
    <text>Interacts with pak1/shk1 and coordinates cell morphogenesis with the cell cycle. It is essential for maintenance of cell polarity and is involved in mitotic control.</text>
</comment>
<comment type="catalytic activity">
    <reaction>
        <text>L-seryl-[protein] + ATP = O-phospho-L-seryl-[protein] + ADP + H(+)</text>
        <dbReference type="Rhea" id="RHEA:17989"/>
        <dbReference type="Rhea" id="RHEA-COMP:9863"/>
        <dbReference type="Rhea" id="RHEA-COMP:11604"/>
        <dbReference type="ChEBI" id="CHEBI:15378"/>
        <dbReference type="ChEBI" id="CHEBI:29999"/>
        <dbReference type="ChEBI" id="CHEBI:30616"/>
        <dbReference type="ChEBI" id="CHEBI:83421"/>
        <dbReference type="ChEBI" id="CHEBI:456216"/>
        <dbReference type="EC" id="2.7.11.1"/>
    </reaction>
</comment>
<comment type="catalytic activity">
    <reaction>
        <text>L-threonyl-[protein] + ATP = O-phospho-L-threonyl-[protein] + ADP + H(+)</text>
        <dbReference type="Rhea" id="RHEA:46608"/>
        <dbReference type="Rhea" id="RHEA-COMP:11060"/>
        <dbReference type="Rhea" id="RHEA-COMP:11605"/>
        <dbReference type="ChEBI" id="CHEBI:15378"/>
        <dbReference type="ChEBI" id="CHEBI:30013"/>
        <dbReference type="ChEBI" id="CHEBI:30616"/>
        <dbReference type="ChEBI" id="CHEBI:61977"/>
        <dbReference type="ChEBI" id="CHEBI:456216"/>
        <dbReference type="EC" id="2.7.11.1"/>
    </reaction>
</comment>
<comment type="subunit">
    <text evidence="4">Interacts with mob2.</text>
</comment>
<comment type="interaction">
    <interactant intactId="EBI-1563264">
        <id>O13310</id>
    </interactant>
    <interactant intactId="EBI-1563284">
        <id>O74558</id>
        <label>mob2</label>
    </interactant>
    <organismsDiffer>false</organismsDiffer>
    <experiments>4</experiments>
</comment>
<comment type="similarity">
    <text evidence="1">Belongs to the protein kinase superfamily. Ser/Thr protein kinase family.</text>
</comment>
<dbReference type="EC" id="2.7.11.1"/>
<dbReference type="EMBL" id="AF009512">
    <property type="protein sequence ID" value="AAC32420.1"/>
    <property type="molecule type" value="Genomic_DNA"/>
</dbReference>
<dbReference type="EMBL" id="CU329670">
    <property type="protein sequence ID" value="CAB57446.1"/>
    <property type="molecule type" value="Genomic_DNA"/>
</dbReference>
<dbReference type="PIR" id="T41723">
    <property type="entry name" value="T41723"/>
</dbReference>
<dbReference type="RefSeq" id="NP_593165.1">
    <property type="nucleotide sequence ID" value="NM_001018563.2"/>
</dbReference>
<dbReference type="SMR" id="O13310"/>
<dbReference type="BioGRID" id="279861">
    <property type="interactions" value="19"/>
</dbReference>
<dbReference type="FunCoup" id="O13310">
    <property type="interactions" value="277"/>
</dbReference>
<dbReference type="IntAct" id="O13310">
    <property type="interactions" value="1"/>
</dbReference>
<dbReference type="STRING" id="284812.O13310"/>
<dbReference type="iPTMnet" id="O13310"/>
<dbReference type="PaxDb" id="4896-SPAC821.12.1"/>
<dbReference type="EnsemblFungi" id="SPAC821.12.1">
    <property type="protein sequence ID" value="SPAC821.12.1:pep"/>
    <property type="gene ID" value="SPAC821.12"/>
</dbReference>
<dbReference type="GeneID" id="2543441"/>
<dbReference type="KEGG" id="spo:2543441"/>
<dbReference type="PomBase" id="SPAC821.12">
    <property type="gene designation" value="orb6"/>
</dbReference>
<dbReference type="VEuPathDB" id="FungiDB:SPAC821.12"/>
<dbReference type="eggNOG" id="KOG0605">
    <property type="taxonomic scope" value="Eukaryota"/>
</dbReference>
<dbReference type="HOGENOM" id="CLU_000288_67_2_1"/>
<dbReference type="InParanoid" id="O13310"/>
<dbReference type="OMA" id="HDNAYYQ"/>
<dbReference type="PhylomeDB" id="O13310"/>
<dbReference type="BRENDA" id="2.7.11.1">
    <property type="organism ID" value="5613"/>
</dbReference>
<dbReference type="CD-CODE" id="0808F6DD">
    <property type="entry name" value="P-body"/>
</dbReference>
<dbReference type="PRO" id="PR:O13310"/>
<dbReference type="Proteomes" id="UP000002485">
    <property type="component" value="Chromosome I"/>
</dbReference>
<dbReference type="GO" id="GO:0051285">
    <property type="term" value="C:cell cortex of cell tip"/>
    <property type="evidence" value="ECO:0000314"/>
    <property type="project" value="PomBase"/>
</dbReference>
<dbReference type="GO" id="GO:0032153">
    <property type="term" value="C:cell division site"/>
    <property type="evidence" value="ECO:0000314"/>
    <property type="project" value="PomBase"/>
</dbReference>
<dbReference type="GO" id="GO:0005829">
    <property type="term" value="C:cytosol"/>
    <property type="evidence" value="ECO:0007005"/>
    <property type="project" value="PomBase"/>
</dbReference>
<dbReference type="GO" id="GO:0035838">
    <property type="term" value="C:growing cell tip"/>
    <property type="evidence" value="ECO:0000314"/>
    <property type="project" value="PomBase"/>
</dbReference>
<dbReference type="GO" id="GO:0005634">
    <property type="term" value="C:nucleus"/>
    <property type="evidence" value="ECO:0007005"/>
    <property type="project" value="PomBase"/>
</dbReference>
<dbReference type="GO" id="GO:0005524">
    <property type="term" value="F:ATP binding"/>
    <property type="evidence" value="ECO:0007669"/>
    <property type="project" value="UniProtKB-KW"/>
</dbReference>
<dbReference type="GO" id="GO:0106310">
    <property type="term" value="F:protein serine kinase activity"/>
    <property type="evidence" value="ECO:0007669"/>
    <property type="project" value="RHEA"/>
</dbReference>
<dbReference type="GO" id="GO:0004674">
    <property type="term" value="F:protein serine/threonine kinase activity"/>
    <property type="evidence" value="ECO:0000314"/>
    <property type="project" value="PomBase"/>
</dbReference>
<dbReference type="GO" id="GO:0071472">
    <property type="term" value="P:cellular response to salt stress"/>
    <property type="evidence" value="ECO:0000314"/>
    <property type="project" value="PomBase"/>
</dbReference>
<dbReference type="GO" id="GO:0030866">
    <property type="term" value="P:cortical actin cytoskeleton organization"/>
    <property type="evidence" value="ECO:0000315"/>
    <property type="project" value="PomBase"/>
</dbReference>
<dbReference type="GO" id="GO:0030950">
    <property type="term" value="P:establishment or maintenance of actin cytoskeleton polarity"/>
    <property type="evidence" value="ECO:0000315"/>
    <property type="project" value="PomBase"/>
</dbReference>
<dbReference type="GO" id="GO:0035556">
    <property type="term" value="P:intracellular signal transduction"/>
    <property type="evidence" value="ECO:0000318"/>
    <property type="project" value="GO_Central"/>
</dbReference>
<dbReference type="GO" id="GO:0097248">
    <property type="term" value="P:maintenance of protein location in cell cortex of cell tip"/>
    <property type="evidence" value="ECO:0000315"/>
    <property type="project" value="PomBase"/>
</dbReference>
<dbReference type="GO" id="GO:2000247">
    <property type="term" value="P:positive regulation of establishment or maintenance of bipolar cell polarity regulating cell shape"/>
    <property type="evidence" value="ECO:0000315"/>
    <property type="project" value="PomBase"/>
</dbReference>
<dbReference type="GO" id="GO:0045921">
    <property type="term" value="P:positive regulation of exocytosis"/>
    <property type="evidence" value="ECO:0000315"/>
    <property type="project" value="PomBase"/>
</dbReference>
<dbReference type="GO" id="GO:0062200">
    <property type="term" value="P:RAM/MOR signaling"/>
    <property type="evidence" value="ECO:0000315"/>
    <property type="project" value="PomBase"/>
</dbReference>
<dbReference type="GO" id="GO:2000100">
    <property type="term" value="P:regulation of establishment or maintenance of bipolar cell polarity regulating cell shape"/>
    <property type="evidence" value="ECO:0000315"/>
    <property type="project" value="PomBase"/>
</dbReference>
<dbReference type="GO" id="GO:0032995">
    <property type="term" value="P:regulation of fungal-type cell wall biogenesis"/>
    <property type="evidence" value="ECO:0000315"/>
    <property type="project" value="PomBase"/>
</dbReference>
<dbReference type="GO" id="GO:0070507">
    <property type="term" value="P:regulation of microtubule cytoskeleton organization"/>
    <property type="evidence" value="ECO:0000315"/>
    <property type="project" value="PomBase"/>
</dbReference>
<dbReference type="CDD" id="cd21773">
    <property type="entry name" value="MobB_CBK1"/>
    <property type="match status" value="1"/>
</dbReference>
<dbReference type="CDD" id="cd05629">
    <property type="entry name" value="STKc_NDR_like_fungal"/>
    <property type="match status" value="1"/>
</dbReference>
<dbReference type="FunFam" id="1.10.510.10:FF:000024">
    <property type="entry name" value="Probable serine/threonine-protein kinase cot-1"/>
    <property type="match status" value="1"/>
</dbReference>
<dbReference type="FunFam" id="3.30.200.20:FF:000192">
    <property type="entry name" value="Serine/threonine-protein kinase cot-1"/>
    <property type="match status" value="1"/>
</dbReference>
<dbReference type="Gene3D" id="3.30.200.20">
    <property type="entry name" value="Phosphorylase Kinase, domain 1"/>
    <property type="match status" value="1"/>
</dbReference>
<dbReference type="Gene3D" id="1.10.510.10">
    <property type="entry name" value="Transferase(Phosphotransferase) domain 1"/>
    <property type="match status" value="1"/>
</dbReference>
<dbReference type="InterPro" id="IPR000961">
    <property type="entry name" value="AGC-kinase_C"/>
</dbReference>
<dbReference type="InterPro" id="IPR011009">
    <property type="entry name" value="Kinase-like_dom_sf"/>
</dbReference>
<dbReference type="InterPro" id="IPR000719">
    <property type="entry name" value="Prot_kinase_dom"/>
</dbReference>
<dbReference type="InterPro" id="IPR017441">
    <property type="entry name" value="Protein_kinase_ATP_BS"/>
</dbReference>
<dbReference type="InterPro" id="IPR050839">
    <property type="entry name" value="Rho-assoc_Ser/Thr_Kinase"/>
</dbReference>
<dbReference type="InterPro" id="IPR008271">
    <property type="entry name" value="Ser/Thr_kinase_AS"/>
</dbReference>
<dbReference type="PANTHER" id="PTHR22988:SF76">
    <property type="entry name" value="CHROMOSOME UNDETERMINED SCAFFOLD_135, WHOLE GENOME SHOTGUN SEQUENCE"/>
    <property type="match status" value="1"/>
</dbReference>
<dbReference type="PANTHER" id="PTHR22988">
    <property type="entry name" value="MYOTONIC DYSTROPHY S/T KINASE-RELATED"/>
    <property type="match status" value="1"/>
</dbReference>
<dbReference type="Pfam" id="PF00069">
    <property type="entry name" value="Pkinase"/>
    <property type="match status" value="2"/>
</dbReference>
<dbReference type="SMART" id="SM00133">
    <property type="entry name" value="S_TK_X"/>
    <property type="match status" value="1"/>
</dbReference>
<dbReference type="SMART" id="SM00220">
    <property type="entry name" value="S_TKc"/>
    <property type="match status" value="1"/>
</dbReference>
<dbReference type="SUPFAM" id="SSF56112">
    <property type="entry name" value="Protein kinase-like (PK-like)"/>
    <property type="match status" value="1"/>
</dbReference>
<dbReference type="PROSITE" id="PS51285">
    <property type="entry name" value="AGC_KINASE_CTER"/>
    <property type="match status" value="1"/>
</dbReference>
<dbReference type="PROSITE" id="PS00107">
    <property type="entry name" value="PROTEIN_KINASE_ATP"/>
    <property type="match status" value="1"/>
</dbReference>
<dbReference type="PROSITE" id="PS50011">
    <property type="entry name" value="PROTEIN_KINASE_DOM"/>
    <property type="match status" value="1"/>
</dbReference>
<dbReference type="PROSITE" id="PS00108">
    <property type="entry name" value="PROTEIN_KINASE_ST"/>
    <property type="match status" value="1"/>
</dbReference>
<organism>
    <name type="scientific">Schizosaccharomyces pombe (strain 972 / ATCC 24843)</name>
    <name type="common">Fission yeast</name>
    <dbReference type="NCBI Taxonomy" id="284812"/>
    <lineage>
        <taxon>Eukaryota</taxon>
        <taxon>Fungi</taxon>
        <taxon>Dikarya</taxon>
        <taxon>Ascomycota</taxon>
        <taxon>Taphrinomycotina</taxon>
        <taxon>Schizosaccharomycetes</taxon>
        <taxon>Schizosaccharomycetales</taxon>
        <taxon>Schizosaccharomycetaceae</taxon>
        <taxon>Schizosaccharomyces</taxon>
    </lineage>
</organism>
<feature type="chain" id="PRO_0000086455" description="Serine/threonine-protein kinase orb6">
    <location>
        <begin position="1"/>
        <end position="469"/>
    </location>
</feature>
<feature type="domain" description="Protein kinase" evidence="1">
    <location>
        <begin position="93"/>
        <end position="392"/>
    </location>
</feature>
<feature type="domain" description="AGC-kinase C-terminal" evidence="2">
    <location>
        <begin position="393"/>
        <end position="467"/>
    </location>
</feature>
<feature type="active site" description="Proton acceptor" evidence="1 3">
    <location>
        <position position="216"/>
    </location>
</feature>
<feature type="binding site" evidence="1">
    <location>
        <begin position="99"/>
        <end position="107"/>
    </location>
    <ligand>
        <name>ATP</name>
        <dbReference type="ChEBI" id="CHEBI:30616"/>
    </ligand>
</feature>
<feature type="binding site" evidence="1">
    <location>
        <position position="122"/>
    </location>
    <ligand>
        <name>ATP</name>
        <dbReference type="ChEBI" id="CHEBI:30616"/>
    </ligand>
</feature>
<reference key="1">
    <citation type="journal article" date="1998" name="Proc. Natl. Acad. Sci. U.S.A.">
        <title>Fission yeast orb6, a ser/thr protein kinase related to mammalian rho kinase and myotonic dystrophy kinase, is required for maintenance of cell polarity and coordinates cell morphogenesis with the cell cycle.</title>
        <authorList>
            <person name="Verde F."/>
            <person name="Wiley D.J."/>
            <person name="Nurse P."/>
        </authorList>
    </citation>
    <scope>NUCLEOTIDE SEQUENCE [GENOMIC DNA]</scope>
</reference>
<reference key="2">
    <citation type="journal article" date="2003" name="J. Cell Sci.">
        <title>Mob2p interacts with the protein kinase Orb6p to promote coordination of cell polarity with cell cycle progression.</title>
        <authorList>
            <person name="Hou M.-C."/>
            <person name="Wiley D.J."/>
            <person name="Verde F."/>
            <person name="McCollum D."/>
        </authorList>
    </citation>
    <scope>INTERACTION WITH MOB2</scope>
</reference>
<reference key="3">
    <citation type="journal article" date="2002" name="Nature">
        <title>The genome sequence of Schizosaccharomyces pombe.</title>
        <authorList>
            <person name="Wood V."/>
            <person name="Gwilliam R."/>
            <person name="Rajandream M.A."/>
            <person name="Lyne M.H."/>
            <person name="Lyne R."/>
            <person name="Stewart A."/>
            <person name="Sgouros J.G."/>
            <person name="Peat N."/>
            <person name="Hayles J."/>
            <person name="Baker S.G."/>
            <person name="Basham D."/>
            <person name="Bowman S."/>
            <person name="Brooks K."/>
            <person name="Brown D."/>
            <person name="Brown S."/>
            <person name="Chillingworth T."/>
            <person name="Churcher C.M."/>
            <person name="Collins M."/>
            <person name="Connor R."/>
            <person name="Cronin A."/>
            <person name="Davis P."/>
            <person name="Feltwell T."/>
            <person name="Fraser A."/>
            <person name="Gentles S."/>
            <person name="Goble A."/>
            <person name="Hamlin N."/>
            <person name="Harris D.E."/>
            <person name="Hidalgo J."/>
            <person name="Hodgson G."/>
            <person name="Holroyd S."/>
            <person name="Hornsby T."/>
            <person name="Howarth S."/>
            <person name="Huckle E.J."/>
            <person name="Hunt S."/>
            <person name="Jagels K."/>
            <person name="James K.D."/>
            <person name="Jones L."/>
            <person name="Jones M."/>
            <person name="Leather S."/>
            <person name="McDonald S."/>
            <person name="McLean J."/>
            <person name="Mooney P."/>
            <person name="Moule S."/>
            <person name="Mungall K.L."/>
            <person name="Murphy L.D."/>
            <person name="Niblett D."/>
            <person name="Odell C."/>
            <person name="Oliver K."/>
            <person name="O'Neil S."/>
            <person name="Pearson D."/>
            <person name="Quail M.A."/>
            <person name="Rabbinowitsch E."/>
            <person name="Rutherford K.M."/>
            <person name="Rutter S."/>
            <person name="Saunders D."/>
            <person name="Seeger K."/>
            <person name="Sharp S."/>
            <person name="Skelton J."/>
            <person name="Simmonds M.N."/>
            <person name="Squares R."/>
            <person name="Squares S."/>
            <person name="Stevens K."/>
            <person name="Taylor K."/>
            <person name="Taylor R.G."/>
            <person name="Tivey A."/>
            <person name="Walsh S.V."/>
            <person name="Warren T."/>
            <person name="Whitehead S."/>
            <person name="Woodward J.R."/>
            <person name="Volckaert G."/>
            <person name="Aert R."/>
            <person name="Robben J."/>
            <person name="Grymonprez B."/>
            <person name="Weltjens I."/>
            <person name="Vanstreels E."/>
            <person name="Rieger M."/>
            <person name="Schaefer M."/>
            <person name="Mueller-Auer S."/>
            <person name="Gabel C."/>
            <person name="Fuchs M."/>
            <person name="Duesterhoeft A."/>
            <person name="Fritzc C."/>
            <person name="Holzer E."/>
            <person name="Moestl D."/>
            <person name="Hilbert H."/>
            <person name="Borzym K."/>
            <person name="Langer I."/>
            <person name="Beck A."/>
            <person name="Lehrach H."/>
            <person name="Reinhardt R."/>
            <person name="Pohl T.M."/>
            <person name="Eger P."/>
            <person name="Zimmermann W."/>
            <person name="Wedler H."/>
            <person name="Wambutt R."/>
            <person name="Purnelle B."/>
            <person name="Goffeau A."/>
            <person name="Cadieu E."/>
            <person name="Dreano S."/>
            <person name="Gloux S."/>
            <person name="Lelaure V."/>
            <person name="Mottier S."/>
            <person name="Galibert F."/>
            <person name="Aves S.J."/>
            <person name="Xiang Z."/>
            <person name="Hunt C."/>
            <person name="Moore K."/>
            <person name="Hurst S.M."/>
            <person name="Lucas M."/>
            <person name="Rochet M."/>
            <person name="Gaillardin C."/>
            <person name="Tallada V.A."/>
            <person name="Garzon A."/>
            <person name="Thode G."/>
            <person name="Daga R.R."/>
            <person name="Cruzado L."/>
            <person name="Jimenez J."/>
            <person name="Sanchez M."/>
            <person name="del Rey F."/>
            <person name="Benito J."/>
            <person name="Dominguez A."/>
            <person name="Revuelta J.L."/>
            <person name="Moreno S."/>
            <person name="Armstrong J."/>
            <person name="Forsburg S.L."/>
            <person name="Cerutti L."/>
            <person name="Lowe T."/>
            <person name="McCombie W.R."/>
            <person name="Paulsen I."/>
            <person name="Potashkin J."/>
            <person name="Shpakovski G.V."/>
            <person name="Ussery D."/>
            <person name="Barrell B.G."/>
            <person name="Nurse P."/>
        </authorList>
    </citation>
    <scope>NUCLEOTIDE SEQUENCE [LARGE SCALE GENOMIC DNA]</scope>
    <source>
        <strain>972 / ATCC 24843</strain>
    </source>
</reference>
<accession>O13310</accession>
<protein>
    <recommendedName>
        <fullName>Serine/threonine-protein kinase orb6</fullName>
        <ecNumber>2.7.11.1</ecNumber>
    </recommendedName>
</protein>